<organism>
    <name type="scientific">Macaca fascicularis</name>
    <name type="common">Crab-eating macaque</name>
    <name type="synonym">Cynomolgus monkey</name>
    <dbReference type="NCBI Taxonomy" id="9541"/>
    <lineage>
        <taxon>Eukaryota</taxon>
        <taxon>Metazoa</taxon>
        <taxon>Chordata</taxon>
        <taxon>Craniata</taxon>
        <taxon>Vertebrata</taxon>
        <taxon>Euteleostomi</taxon>
        <taxon>Mammalia</taxon>
        <taxon>Eutheria</taxon>
        <taxon>Euarchontoglires</taxon>
        <taxon>Primates</taxon>
        <taxon>Haplorrhini</taxon>
        <taxon>Catarrhini</taxon>
        <taxon>Cercopithecidae</taxon>
        <taxon>Cercopithecinae</taxon>
        <taxon>Macaca</taxon>
    </lineage>
</organism>
<gene>
    <name type="primary">SMCR5</name>
    <name type="ORF">QflA-15031</name>
</gene>
<protein>
    <recommendedName>
        <fullName>Smith-Magenis syndrome chromosomal region candidate gene 5 protein homolog</fullName>
    </recommendedName>
</protein>
<reference key="1">
    <citation type="submission" date="2001-03" db="EMBL/GenBank/DDBJ databases">
        <authorList>
            <person name="Hashimoto K."/>
            <person name="Osada N."/>
            <person name="Hida M."/>
            <person name="Kusuda J."/>
            <person name="Sugano S."/>
        </authorList>
    </citation>
    <scope>NUCLEOTIDE SEQUENCE [LARGE SCALE MRNA]</scope>
    <source>
        <tissue>Frontal cortex</tissue>
    </source>
</reference>
<accession>Q9BE57</accession>
<name>SMCR5_MACFA</name>
<proteinExistence type="evidence at transcript level"/>
<keyword id="KW-1185">Reference proteome</keyword>
<sequence>MRRCLRVKTRRGQLGLASGCFEQHSCFSPRVNRILSAVQNTPCAGPSSQAPPQPPQASPPAAPDHSRTPSLLASSHSASGGESLFQLYMASLAWPQNCCVLESCRRIPLGGLSSMENRRPLLRKGRLLRGQIHHGQDNQLWGLTGAGALLSG</sequence>
<feature type="chain" id="PRO_0000307804" description="Smith-Magenis syndrome chromosomal region candidate gene 5 protein homolog">
    <location>
        <begin position="1"/>
        <end position="152"/>
    </location>
</feature>
<feature type="region of interest" description="Disordered" evidence="1">
    <location>
        <begin position="41"/>
        <end position="77"/>
    </location>
</feature>
<feature type="compositionally biased region" description="Pro residues" evidence="1">
    <location>
        <begin position="49"/>
        <end position="62"/>
    </location>
</feature>
<dbReference type="EMBL" id="AB056813">
    <property type="protein sequence ID" value="BAB39338.1"/>
    <property type="molecule type" value="mRNA"/>
</dbReference>
<dbReference type="Proteomes" id="UP000233100">
    <property type="component" value="Unplaced"/>
</dbReference>
<evidence type="ECO:0000256" key="1">
    <source>
        <dbReference type="SAM" id="MobiDB-lite"/>
    </source>
</evidence>